<accession>Q8KA55</accession>
<proteinExistence type="inferred from homology"/>
<reference key="1">
    <citation type="journal article" date="2002" name="Science">
        <title>50 million years of genomic stasis in endosymbiotic bacteria.</title>
        <authorList>
            <person name="Tamas I."/>
            <person name="Klasson L."/>
            <person name="Canbaeck B."/>
            <person name="Naeslund A.K."/>
            <person name="Eriksson A.-S."/>
            <person name="Wernegreen J.J."/>
            <person name="Sandstroem J.P."/>
            <person name="Moran N.A."/>
            <person name="Andersson S.G.E."/>
        </authorList>
    </citation>
    <scope>NUCLEOTIDE SEQUENCE [LARGE SCALE GENOMIC DNA]</scope>
    <source>
        <strain>Sg</strain>
    </source>
</reference>
<protein>
    <recommendedName>
        <fullName evidence="1">3,4-dihydroxy-2-butanone 4-phosphate synthase</fullName>
        <shortName evidence="1">DHBP synthase</shortName>
        <ecNumber evidence="1">4.1.99.12</ecNumber>
    </recommendedName>
</protein>
<feature type="chain" id="PRO_0000151792" description="3,4-dihydroxy-2-butanone 4-phosphate synthase">
    <location>
        <begin position="1"/>
        <end position="213"/>
    </location>
</feature>
<feature type="binding site" evidence="1">
    <location>
        <begin position="37"/>
        <end position="38"/>
    </location>
    <ligand>
        <name>D-ribulose 5-phosphate</name>
        <dbReference type="ChEBI" id="CHEBI:58121"/>
    </ligand>
</feature>
<feature type="binding site" evidence="1">
    <location>
        <position position="38"/>
    </location>
    <ligand>
        <name>Mg(2+)</name>
        <dbReference type="ChEBI" id="CHEBI:18420"/>
        <label>1</label>
    </ligand>
</feature>
<feature type="binding site" evidence="1">
    <location>
        <position position="38"/>
    </location>
    <ligand>
        <name>Mg(2+)</name>
        <dbReference type="ChEBI" id="CHEBI:18420"/>
        <label>2</label>
    </ligand>
</feature>
<feature type="binding site" evidence="1">
    <location>
        <position position="42"/>
    </location>
    <ligand>
        <name>D-ribulose 5-phosphate</name>
        <dbReference type="ChEBI" id="CHEBI:58121"/>
    </ligand>
</feature>
<feature type="binding site" evidence="1">
    <location>
        <begin position="150"/>
        <end position="154"/>
    </location>
    <ligand>
        <name>D-ribulose 5-phosphate</name>
        <dbReference type="ChEBI" id="CHEBI:58121"/>
    </ligand>
</feature>
<feature type="binding site" evidence="1">
    <location>
        <position position="153"/>
    </location>
    <ligand>
        <name>Mg(2+)</name>
        <dbReference type="ChEBI" id="CHEBI:18420"/>
        <label>2</label>
    </ligand>
</feature>
<feature type="binding site" evidence="1">
    <location>
        <position position="174"/>
    </location>
    <ligand>
        <name>D-ribulose 5-phosphate</name>
        <dbReference type="ChEBI" id="CHEBI:58121"/>
    </ligand>
</feature>
<feature type="site" description="Essential for catalytic activity" evidence="1">
    <location>
        <position position="136"/>
    </location>
</feature>
<feature type="site" description="Essential for catalytic activity" evidence="1">
    <location>
        <position position="174"/>
    </location>
</feature>
<gene>
    <name evidence="1" type="primary">ribB</name>
    <name type="ordered locus">BUsg_056</name>
</gene>
<dbReference type="EC" id="4.1.99.12" evidence="1"/>
<dbReference type="EMBL" id="AE013218">
    <property type="protein sequence ID" value="AAM67627.1"/>
    <property type="molecule type" value="Genomic_DNA"/>
</dbReference>
<dbReference type="RefSeq" id="WP_011053593.1">
    <property type="nucleotide sequence ID" value="NC_004061.1"/>
</dbReference>
<dbReference type="SMR" id="Q8KA55"/>
<dbReference type="STRING" id="198804.BUsg_056"/>
<dbReference type="GeneID" id="93003523"/>
<dbReference type="KEGG" id="bas:BUsg_056"/>
<dbReference type="eggNOG" id="COG0108">
    <property type="taxonomic scope" value="Bacteria"/>
</dbReference>
<dbReference type="HOGENOM" id="CLU_020273_3_0_6"/>
<dbReference type="UniPathway" id="UPA00275">
    <property type="reaction ID" value="UER00399"/>
</dbReference>
<dbReference type="Proteomes" id="UP000000416">
    <property type="component" value="Chromosome"/>
</dbReference>
<dbReference type="GO" id="GO:0005829">
    <property type="term" value="C:cytosol"/>
    <property type="evidence" value="ECO:0007669"/>
    <property type="project" value="TreeGrafter"/>
</dbReference>
<dbReference type="GO" id="GO:0008686">
    <property type="term" value="F:3,4-dihydroxy-2-butanone-4-phosphate synthase activity"/>
    <property type="evidence" value="ECO:0007669"/>
    <property type="project" value="UniProtKB-UniRule"/>
</dbReference>
<dbReference type="GO" id="GO:0000287">
    <property type="term" value="F:magnesium ion binding"/>
    <property type="evidence" value="ECO:0007669"/>
    <property type="project" value="UniProtKB-UniRule"/>
</dbReference>
<dbReference type="GO" id="GO:0030145">
    <property type="term" value="F:manganese ion binding"/>
    <property type="evidence" value="ECO:0007669"/>
    <property type="project" value="UniProtKB-UniRule"/>
</dbReference>
<dbReference type="GO" id="GO:0009231">
    <property type="term" value="P:riboflavin biosynthetic process"/>
    <property type="evidence" value="ECO:0007669"/>
    <property type="project" value="UniProtKB-UniRule"/>
</dbReference>
<dbReference type="FunFam" id="3.90.870.10:FF:000002">
    <property type="entry name" value="3,4-dihydroxy-2-butanone 4-phosphate synthase"/>
    <property type="match status" value="1"/>
</dbReference>
<dbReference type="Gene3D" id="3.90.870.10">
    <property type="entry name" value="DHBP synthase"/>
    <property type="match status" value="1"/>
</dbReference>
<dbReference type="HAMAP" id="MF_00180">
    <property type="entry name" value="RibB"/>
    <property type="match status" value="1"/>
</dbReference>
<dbReference type="InterPro" id="IPR017945">
    <property type="entry name" value="DHBP_synth_RibB-like_a/b_dom"/>
</dbReference>
<dbReference type="InterPro" id="IPR000422">
    <property type="entry name" value="DHBP_synthase_RibB"/>
</dbReference>
<dbReference type="NCBIfam" id="TIGR00506">
    <property type="entry name" value="ribB"/>
    <property type="match status" value="1"/>
</dbReference>
<dbReference type="PANTHER" id="PTHR21327:SF38">
    <property type="entry name" value="3,4-DIHYDROXY-2-BUTANONE 4-PHOSPHATE SYNTHASE"/>
    <property type="match status" value="1"/>
</dbReference>
<dbReference type="PANTHER" id="PTHR21327">
    <property type="entry name" value="GTP CYCLOHYDROLASE II-RELATED"/>
    <property type="match status" value="1"/>
</dbReference>
<dbReference type="Pfam" id="PF00926">
    <property type="entry name" value="DHBP_synthase"/>
    <property type="match status" value="1"/>
</dbReference>
<dbReference type="SUPFAM" id="SSF55821">
    <property type="entry name" value="YrdC/RibB"/>
    <property type="match status" value="1"/>
</dbReference>
<keyword id="KW-0456">Lyase</keyword>
<keyword id="KW-0460">Magnesium</keyword>
<keyword id="KW-0464">Manganese</keyword>
<keyword id="KW-0479">Metal-binding</keyword>
<keyword id="KW-0686">Riboflavin biosynthesis</keyword>
<comment type="function">
    <text evidence="1">Catalyzes the conversion of D-ribulose 5-phosphate to formate and 3,4-dihydroxy-2-butanone 4-phosphate.</text>
</comment>
<comment type="catalytic activity">
    <reaction evidence="1">
        <text>D-ribulose 5-phosphate = (2S)-2-hydroxy-3-oxobutyl phosphate + formate + H(+)</text>
        <dbReference type="Rhea" id="RHEA:18457"/>
        <dbReference type="ChEBI" id="CHEBI:15378"/>
        <dbReference type="ChEBI" id="CHEBI:15740"/>
        <dbReference type="ChEBI" id="CHEBI:58121"/>
        <dbReference type="ChEBI" id="CHEBI:58830"/>
        <dbReference type="EC" id="4.1.99.12"/>
    </reaction>
</comment>
<comment type="cofactor">
    <cofactor evidence="1">
        <name>Mg(2+)</name>
        <dbReference type="ChEBI" id="CHEBI:18420"/>
    </cofactor>
    <cofactor evidence="1">
        <name>Mn(2+)</name>
        <dbReference type="ChEBI" id="CHEBI:29035"/>
    </cofactor>
    <text evidence="1">Binds 2 divalent metal cations per subunit. Magnesium or manganese.</text>
</comment>
<comment type="pathway">
    <text evidence="1">Cofactor biosynthesis; riboflavin biosynthesis; 2-hydroxy-3-oxobutyl phosphate from D-ribulose 5-phosphate: step 1/1.</text>
</comment>
<comment type="subunit">
    <text evidence="1">Homodimer.</text>
</comment>
<comment type="similarity">
    <text evidence="1">Belongs to the DHBP synthase family.</text>
</comment>
<name>RIBB_BUCAP</name>
<organism>
    <name type="scientific">Buchnera aphidicola subsp. Schizaphis graminum (strain Sg)</name>
    <dbReference type="NCBI Taxonomy" id="198804"/>
    <lineage>
        <taxon>Bacteria</taxon>
        <taxon>Pseudomonadati</taxon>
        <taxon>Pseudomonadota</taxon>
        <taxon>Gammaproteobacteria</taxon>
        <taxon>Enterobacterales</taxon>
        <taxon>Erwiniaceae</taxon>
        <taxon>Buchnera</taxon>
    </lineage>
</organism>
<evidence type="ECO:0000255" key="1">
    <source>
        <dbReference type="HAMAP-Rule" id="MF_00180"/>
    </source>
</evidence>
<sequence length="213" mass="23278">MNQTLLSEFGNPIERVKKAISALQLGEGIIILDDEKRENEGDLVFSSETMTVEQMALTIRYGSGIVCLCITESKRKKLNLPMMVKHNTSTYRTGFTVTIEASKGVSTGVSAKDRLTTIKTATADDAQPSDLNRPGHVFPLRANGGGILARAGHTEAAIEIVSLAGFKPYGVICELTNKDGSMSRTPEIIKFSKSKKMKILTIKDLILYVQNKK</sequence>